<feature type="chain" id="PRO_0000138068" description="NADP(+)-dependent glycerol-3-phosphate dehydrogenase">
    <location>
        <begin position="1"/>
        <end position="335"/>
    </location>
</feature>
<feature type="active site" description="Proton acceptor" evidence="2">
    <location>
        <position position="192"/>
    </location>
</feature>
<feature type="binding site" evidence="1">
    <location>
        <position position="137"/>
    </location>
    <ligand>
        <name>sn-glycerol 3-phosphate</name>
        <dbReference type="ChEBI" id="CHEBI:57597"/>
    </ligand>
</feature>
<feature type="binding site" evidence="1">
    <location>
        <position position="141"/>
    </location>
    <ligand>
        <name>NADPH</name>
        <dbReference type="ChEBI" id="CHEBI:57783"/>
    </ligand>
</feature>
<feature type="binding site" evidence="1">
    <location>
        <position position="192"/>
    </location>
    <ligand>
        <name>sn-glycerol 3-phosphate</name>
        <dbReference type="ChEBI" id="CHEBI:57597"/>
    </ligand>
</feature>
<feature type="binding site" evidence="1">
    <location>
        <position position="250"/>
    </location>
    <ligand>
        <name>sn-glycerol 3-phosphate</name>
        <dbReference type="ChEBI" id="CHEBI:57597"/>
    </ligand>
</feature>
<feature type="binding site" evidence="1">
    <location>
        <position position="259"/>
    </location>
    <ligand>
        <name>NADPH</name>
        <dbReference type="ChEBI" id="CHEBI:57783"/>
    </ligand>
</feature>
<feature type="binding site" evidence="1">
    <location>
        <position position="259"/>
    </location>
    <ligand>
        <name>sn-glycerol 3-phosphate</name>
        <dbReference type="ChEBI" id="CHEBI:57597"/>
    </ligand>
</feature>
<feature type="binding site" evidence="1">
    <location>
        <position position="260"/>
    </location>
    <ligand>
        <name>sn-glycerol 3-phosphate</name>
        <dbReference type="ChEBI" id="CHEBI:57597"/>
    </ligand>
</feature>
<feature type="binding site" evidence="1">
    <location>
        <position position="287"/>
    </location>
    <ligand>
        <name>NADPH</name>
        <dbReference type="ChEBI" id="CHEBI:57783"/>
    </ligand>
</feature>
<feature type="binding site" evidence="1">
    <location>
        <position position="289"/>
    </location>
    <ligand>
        <name>NADPH</name>
        <dbReference type="ChEBI" id="CHEBI:57783"/>
    </ligand>
</feature>
<feature type="strand" evidence="7">
    <location>
        <begin position="2"/>
        <end position="7"/>
    </location>
</feature>
<feature type="helix" evidence="7">
    <location>
        <begin position="10"/>
        <end position="22"/>
    </location>
</feature>
<feature type="strand" evidence="7">
    <location>
        <begin position="25"/>
        <end position="29"/>
    </location>
</feature>
<feature type="helix" evidence="7">
    <location>
        <begin position="32"/>
        <end position="34"/>
    </location>
</feature>
<feature type="helix" evidence="7">
    <location>
        <begin position="35"/>
        <end position="42"/>
    </location>
</feature>
<feature type="turn" evidence="7">
    <location>
        <begin position="48"/>
        <end position="50"/>
    </location>
</feature>
<feature type="strand" evidence="7">
    <location>
        <begin position="56"/>
        <end position="60"/>
    </location>
</feature>
<feature type="helix" evidence="7">
    <location>
        <begin position="62"/>
        <end position="64"/>
    </location>
</feature>
<feature type="helix" evidence="7">
    <location>
        <begin position="65"/>
        <end position="69"/>
    </location>
</feature>
<feature type="strand" evidence="7">
    <location>
        <begin position="73"/>
        <end position="77"/>
    </location>
</feature>
<feature type="helix" evidence="7">
    <location>
        <begin position="81"/>
        <end position="83"/>
    </location>
</feature>
<feature type="helix" evidence="7">
    <location>
        <begin position="84"/>
        <end position="91"/>
    </location>
</feature>
<feature type="turn" evidence="7">
    <location>
        <begin position="92"/>
        <end position="94"/>
    </location>
</feature>
<feature type="strand" evidence="7">
    <location>
        <begin position="99"/>
        <end position="102"/>
    </location>
</feature>
<feature type="strand" evidence="7">
    <location>
        <begin position="106"/>
        <end position="110"/>
    </location>
</feature>
<feature type="strand" evidence="7">
    <location>
        <begin position="113"/>
        <end position="116"/>
    </location>
</feature>
<feature type="helix" evidence="7">
    <location>
        <begin position="117"/>
        <end position="122"/>
    </location>
</feature>
<feature type="helix" evidence="7">
    <location>
        <begin position="129"/>
        <end position="131"/>
    </location>
</feature>
<feature type="strand" evidence="7">
    <location>
        <begin position="132"/>
        <end position="138"/>
    </location>
</feature>
<feature type="helix" evidence="7">
    <location>
        <begin position="141"/>
        <end position="145"/>
    </location>
</feature>
<feature type="strand" evidence="7">
    <location>
        <begin position="150"/>
        <end position="155"/>
    </location>
</feature>
<feature type="helix" evidence="7">
    <location>
        <begin position="159"/>
        <end position="169"/>
    </location>
</feature>
<feature type="strand" evidence="7">
    <location>
        <begin position="174"/>
        <end position="180"/>
    </location>
</feature>
<feature type="helix" evidence="7">
    <location>
        <begin position="182"/>
        <end position="209"/>
    </location>
</feature>
<feature type="helix" evidence="7">
    <location>
        <begin position="214"/>
        <end position="235"/>
    </location>
</feature>
<feature type="helix" evidence="7">
    <location>
        <begin position="239"/>
        <end position="243"/>
    </location>
</feature>
<feature type="turn" evidence="7">
    <location>
        <begin position="245"/>
        <end position="247"/>
    </location>
</feature>
<feature type="helix" evidence="7">
    <location>
        <begin position="248"/>
        <end position="253"/>
    </location>
</feature>
<feature type="turn" evidence="7">
    <location>
        <begin position="254"/>
        <end position="256"/>
    </location>
</feature>
<feature type="helix" evidence="7">
    <location>
        <begin position="258"/>
        <end position="268"/>
    </location>
</feature>
<feature type="helix" evidence="7">
    <location>
        <begin position="273"/>
        <end position="282"/>
    </location>
</feature>
<feature type="helix" evidence="7">
    <location>
        <begin position="289"/>
        <end position="303"/>
    </location>
</feature>
<feature type="helix" evidence="7">
    <location>
        <begin position="309"/>
        <end position="319"/>
    </location>
</feature>
<feature type="helix" evidence="7">
    <location>
        <begin position="324"/>
        <end position="332"/>
    </location>
</feature>
<accession>O29390</accession>
<dbReference type="EC" id="1.1.1.-" evidence="3"/>
<dbReference type="EMBL" id="AE000782">
    <property type="protein sequence ID" value="AAB90367.1"/>
    <property type="molecule type" value="Genomic_DNA"/>
</dbReference>
<dbReference type="PIR" id="G69358">
    <property type="entry name" value="G69358"/>
</dbReference>
<dbReference type="RefSeq" id="WP_010878372.1">
    <property type="nucleotide sequence ID" value="NC_000917.1"/>
</dbReference>
<dbReference type="PDB" id="1TXG">
    <property type="method" value="X-ray"/>
    <property type="resolution" value="1.70 A"/>
    <property type="chains" value="A/B=1-335"/>
</dbReference>
<dbReference type="PDBsum" id="1TXG"/>
<dbReference type="SMR" id="O29390"/>
<dbReference type="STRING" id="224325.AF_0871"/>
<dbReference type="PaxDb" id="224325-AF_0871"/>
<dbReference type="EnsemblBacteria" id="AAB90367">
    <property type="protein sequence ID" value="AAB90367"/>
    <property type="gene ID" value="AF_0871"/>
</dbReference>
<dbReference type="GeneID" id="24794469"/>
<dbReference type="KEGG" id="afu:AF_0871"/>
<dbReference type="eggNOG" id="arCOG00456">
    <property type="taxonomic scope" value="Archaea"/>
</dbReference>
<dbReference type="HOGENOM" id="CLU_033449_1_1_2"/>
<dbReference type="OrthoDB" id="51496at2157"/>
<dbReference type="PhylomeDB" id="O29390"/>
<dbReference type="SABIO-RK" id="O29390"/>
<dbReference type="EvolutionaryTrace" id="O29390"/>
<dbReference type="Proteomes" id="UP000002199">
    <property type="component" value="Chromosome"/>
</dbReference>
<dbReference type="GO" id="GO:0005829">
    <property type="term" value="C:cytosol"/>
    <property type="evidence" value="ECO:0007669"/>
    <property type="project" value="TreeGrafter"/>
</dbReference>
<dbReference type="GO" id="GO:0141153">
    <property type="term" value="F:glycerol-3-phosphate dehydrogenase (NADP+) activity"/>
    <property type="evidence" value="ECO:0007669"/>
    <property type="project" value="RHEA"/>
</dbReference>
<dbReference type="GO" id="GO:0051287">
    <property type="term" value="F:NAD binding"/>
    <property type="evidence" value="ECO:0007669"/>
    <property type="project" value="InterPro"/>
</dbReference>
<dbReference type="GO" id="GO:0005975">
    <property type="term" value="P:carbohydrate metabolic process"/>
    <property type="evidence" value="ECO:0007669"/>
    <property type="project" value="InterPro"/>
</dbReference>
<dbReference type="GO" id="GO:0046167">
    <property type="term" value="P:glycerol-3-phosphate biosynthetic process"/>
    <property type="evidence" value="ECO:0007669"/>
    <property type="project" value="UniProtKB-UniRule"/>
</dbReference>
<dbReference type="GO" id="GO:0046168">
    <property type="term" value="P:glycerol-3-phosphate catabolic process"/>
    <property type="evidence" value="ECO:0007669"/>
    <property type="project" value="InterPro"/>
</dbReference>
<dbReference type="GO" id="GO:0006650">
    <property type="term" value="P:glycerophospholipid metabolic process"/>
    <property type="evidence" value="ECO:0007669"/>
    <property type="project" value="UniProtKB-UniRule"/>
</dbReference>
<dbReference type="Gene3D" id="1.10.1040.10">
    <property type="entry name" value="N-(1-d-carboxylethyl)-l-norvaline Dehydrogenase, domain 2"/>
    <property type="match status" value="1"/>
</dbReference>
<dbReference type="Gene3D" id="3.40.50.720">
    <property type="entry name" value="NAD(P)-binding Rossmann-like Domain"/>
    <property type="match status" value="1"/>
</dbReference>
<dbReference type="HAMAP" id="MF_00394">
    <property type="entry name" value="NAD_Glyc3P_dehydrog"/>
    <property type="match status" value="1"/>
</dbReference>
<dbReference type="InterPro" id="IPR008927">
    <property type="entry name" value="6-PGluconate_DH-like_C_sf"/>
</dbReference>
<dbReference type="InterPro" id="IPR013328">
    <property type="entry name" value="6PGD_dom2"/>
</dbReference>
<dbReference type="InterPro" id="IPR006168">
    <property type="entry name" value="G3P_DH_NAD-dep"/>
</dbReference>
<dbReference type="InterPro" id="IPR006109">
    <property type="entry name" value="G3P_DH_NAD-dep_C"/>
</dbReference>
<dbReference type="InterPro" id="IPR011128">
    <property type="entry name" value="G3P_DH_NAD-dep_N"/>
</dbReference>
<dbReference type="InterPro" id="IPR036291">
    <property type="entry name" value="NAD(P)-bd_dom_sf"/>
</dbReference>
<dbReference type="PANTHER" id="PTHR11728">
    <property type="entry name" value="GLYCEROL-3-PHOSPHATE DEHYDROGENASE"/>
    <property type="match status" value="1"/>
</dbReference>
<dbReference type="PANTHER" id="PTHR11728:SF1">
    <property type="entry name" value="GLYCEROL-3-PHOSPHATE DEHYDROGENASE [NAD(+)] 2, CHLOROPLASTIC"/>
    <property type="match status" value="1"/>
</dbReference>
<dbReference type="Pfam" id="PF07479">
    <property type="entry name" value="NAD_Gly3P_dh_C"/>
    <property type="match status" value="1"/>
</dbReference>
<dbReference type="Pfam" id="PF01210">
    <property type="entry name" value="NAD_Gly3P_dh_N"/>
    <property type="match status" value="1"/>
</dbReference>
<dbReference type="PIRSF" id="PIRSF000114">
    <property type="entry name" value="Glycerol-3-P_dh"/>
    <property type="match status" value="1"/>
</dbReference>
<dbReference type="PRINTS" id="PR00077">
    <property type="entry name" value="GPDHDRGNASE"/>
</dbReference>
<dbReference type="SUPFAM" id="SSF48179">
    <property type="entry name" value="6-phosphogluconate dehydrogenase C-terminal domain-like"/>
    <property type="match status" value="1"/>
</dbReference>
<dbReference type="SUPFAM" id="SSF51735">
    <property type="entry name" value="NAD(P)-binding Rossmann-fold domains"/>
    <property type="match status" value="1"/>
</dbReference>
<reference key="1">
    <citation type="journal article" date="1997" name="Nature">
        <title>The complete genome sequence of the hyperthermophilic, sulphate-reducing archaeon Archaeoglobus fulgidus.</title>
        <authorList>
            <person name="Klenk H.-P."/>
            <person name="Clayton R.A."/>
            <person name="Tomb J.-F."/>
            <person name="White O."/>
            <person name="Nelson K.E."/>
            <person name="Ketchum K.A."/>
            <person name="Dodson R.J."/>
            <person name="Gwinn M.L."/>
            <person name="Hickey E.K."/>
            <person name="Peterson J.D."/>
            <person name="Richardson D.L."/>
            <person name="Kerlavage A.R."/>
            <person name="Graham D.E."/>
            <person name="Kyrpides N.C."/>
            <person name="Fleischmann R.D."/>
            <person name="Quackenbush J."/>
            <person name="Lee N.H."/>
            <person name="Sutton G.G."/>
            <person name="Gill S.R."/>
            <person name="Kirkness E.F."/>
            <person name="Dougherty B.A."/>
            <person name="McKenney K."/>
            <person name="Adams M.D."/>
            <person name="Loftus B.J."/>
            <person name="Peterson S.N."/>
            <person name="Reich C.I."/>
            <person name="McNeil L.K."/>
            <person name="Badger J.H."/>
            <person name="Glodek A."/>
            <person name="Zhou L."/>
            <person name="Overbeek R."/>
            <person name="Gocayne J.D."/>
            <person name="Weidman J.F."/>
            <person name="McDonald L.A."/>
            <person name="Utterback T.R."/>
            <person name="Cotton M.D."/>
            <person name="Spriggs T."/>
            <person name="Artiach P."/>
            <person name="Kaine B.P."/>
            <person name="Sykes S.M."/>
            <person name="Sadow P.W."/>
            <person name="D'Andrea K.P."/>
            <person name="Bowman C."/>
            <person name="Fujii C."/>
            <person name="Garland S.A."/>
            <person name="Mason T.M."/>
            <person name="Olsen G.J."/>
            <person name="Fraser C.M."/>
            <person name="Smith H.O."/>
            <person name="Woese C.R."/>
            <person name="Venter J.C."/>
        </authorList>
    </citation>
    <scope>NUCLEOTIDE SEQUENCE [LARGE SCALE GENOMIC DNA]</scope>
    <source>
        <strain>ATCC 49558 / DSM 4304 / JCM 9628 / NBRC 100126 / VC-16</strain>
    </source>
</reference>
<reference key="2">
    <citation type="journal article" date="2004" name="Protein Sci.">
        <title>Structural and functional analysis of the gpsA gene product of Archaeoglobus fulgidus: a glycerol-3-phosphate dehydrogenase with an unusual NADP+ preference.</title>
        <authorList>
            <person name="Sakasegawa S."/>
            <person name="Hagemeier C.H."/>
            <person name="Thauer R.K."/>
            <person name="Essen L.-O."/>
            <person name="Shima S."/>
        </authorList>
    </citation>
    <scope>X-RAY CRYSTALLOGRAPHY (1.7 ANGSTROMS)</scope>
    <scope>FUNCTION</scope>
    <scope>CATALYTIC ACTIVITY</scope>
    <scope>BIOPHYSICOCHEMICAL PROPERTIES</scope>
    <scope>SUBSTRATE SPECIFICITY</scope>
    <scope>SUBUNIT</scope>
</reference>
<gene>
    <name evidence="2 4" type="primary">gpsA</name>
    <name type="ordered locus">AF_0871</name>
</gene>
<proteinExistence type="evidence at protein level"/>
<organism>
    <name type="scientific">Archaeoglobus fulgidus (strain ATCC 49558 / DSM 4304 / JCM 9628 / NBRC 100126 / VC-16)</name>
    <dbReference type="NCBI Taxonomy" id="224325"/>
    <lineage>
        <taxon>Archaea</taxon>
        <taxon>Methanobacteriati</taxon>
        <taxon>Methanobacteriota</taxon>
        <taxon>Archaeoglobi</taxon>
        <taxon>Archaeoglobales</taxon>
        <taxon>Archaeoglobaceae</taxon>
        <taxon>Archaeoglobus</taxon>
    </lineage>
</organism>
<sequence length="335" mass="36785">MIVSILGAGAMGSALSVPLVDNGNEVRIWGTEFDTEILKSISAGREHPRLGVKLNGVEIFWPEQLEKCLENAEVVLLGVSTDGVLPVMSRILPYLKDQYIVLISKGLIDFDNSVLTVPEAVWRLKHDLRERTVAITGPAIAREVAKRMPTTVVFSSPSESSANKMKEIFETEYFGVEVTTDIIGTEITSALKNVYSIAIAWIRGYESRKNVEMSNAKGVIATRAINEMAELIEILGGDRETAFGLSGFGDLIATFRGGRNGMLGELLGKGLSIDEAMEELERRGVGVVEGYKTAEKAYRLSSKINADTKLLDSIYRVLYEGLKVEEVLFELATFK</sequence>
<keyword id="KW-0002">3D-structure</keyword>
<keyword id="KW-0963">Cytoplasm</keyword>
<keyword id="KW-0521">NADP</keyword>
<keyword id="KW-0560">Oxidoreductase</keyword>
<keyword id="KW-1185">Reference proteome</keyword>
<protein>
    <recommendedName>
        <fullName evidence="4">NADP(+)-dependent glycerol-3-phosphate dehydrogenase</fullName>
        <shortName evidence="4">NADP(+)-dependent G3PDH</shortName>
        <ecNumber evidence="3">1.1.1.-</ecNumber>
    </recommendedName>
    <alternativeName>
        <fullName evidence="6">NADPH-dependent dihydroxyacetone-phosphate reductase</fullName>
    </alternativeName>
</protein>
<comment type="function">
    <text evidence="3">Catalyzes the reduction of the glycolytic intermediate dihydroxyacetone phosphate (DHAP) to sn-glycerol 3-phosphate (G3P). Shows a 15-fold preference for NADPH over NADH in the reduction process. Can also catalyze the reverse reaction in vitro. Shows no activity with dihydroxyacetone, glycerol, glycerol-2-phosphate, D-glyceraldehyde-3-phosphate, DL-glyceraldehyde, D-erythrose-4-phosphate, D-fructose-6-phosphate, beta-D-glucose-6-phosphate, or alpha-D-galactose-1-phosphate.</text>
</comment>
<comment type="catalytic activity">
    <reaction evidence="3">
        <text>sn-glycerol 3-phosphate + NADP(+) = dihydroxyacetone phosphate + NADPH + H(+)</text>
        <dbReference type="Rhea" id="RHEA:11096"/>
        <dbReference type="ChEBI" id="CHEBI:15378"/>
        <dbReference type="ChEBI" id="CHEBI:57597"/>
        <dbReference type="ChEBI" id="CHEBI:57642"/>
        <dbReference type="ChEBI" id="CHEBI:57783"/>
        <dbReference type="ChEBI" id="CHEBI:58349"/>
    </reaction>
    <physiologicalReaction direction="right-to-left" evidence="6">
        <dbReference type="Rhea" id="RHEA:11098"/>
    </physiologicalReaction>
</comment>
<comment type="biophysicochemical properties">
    <kinetics>
        <KM evidence="3">40 uM for NADPH</KM>
        <KM evidence="3">1 mM for dihydroxyacetone phosphate</KM>
        <KM evidence="3">0.8 mM for NADP(+)</KM>
        <KM evidence="3">0.1 mM for sn-glycerol 3-phosphate</KM>
        <Vmax evidence="3">44.0 umol/min/mg enzyme for the NADPH-dependent dihydroxyacetone phosphate reduction</Vmax>
        <Vmax evidence="3">4.0 umol/min/mg enzyme for the NADP(+)-dependent sn-glycerol 3-phosphate oxidation</Vmax>
    </kinetics>
    <temperatureDependence>
        <text evidence="3">Optimum temperature is 70 degrees Celsius. Is thermostable up to 85 degrees Celsius.</text>
    </temperatureDependence>
</comment>
<comment type="subunit">
    <text evidence="3">Homodimer.</text>
</comment>
<comment type="subcellular location">
    <subcellularLocation>
        <location evidence="5">Cytoplasm</location>
    </subcellularLocation>
</comment>
<comment type="miscellaneous">
    <text evidence="6">Glycerol-3-phosphate dehydrogenase (G3PDH) is generally absent in archaea, because archaea, unlike eukaryotes and eubacteria, utilize glycerol-1-phosphate instead of glycerol-3-phosphate for the biosynthesis of membrane lipids. Surprisingly, the genome of the hyperthermophilic archaeon A.fulgidus comprises a G3PDH ortholog, most likely due to horizontal gene transfer from a eubacterial organism.</text>
</comment>
<comment type="similarity">
    <text evidence="2">Belongs to the NAD-dependent glycerol-3-phosphate dehydrogenase family.</text>
</comment>
<evidence type="ECO:0000250" key="1">
    <source>
        <dbReference type="UniProtKB" id="A0A0F6AK91"/>
    </source>
</evidence>
<evidence type="ECO:0000255" key="2">
    <source>
        <dbReference type="HAMAP-Rule" id="MF_00394"/>
    </source>
</evidence>
<evidence type="ECO:0000269" key="3">
    <source>
    </source>
</evidence>
<evidence type="ECO:0000303" key="4">
    <source>
    </source>
</evidence>
<evidence type="ECO:0000305" key="5"/>
<evidence type="ECO:0000305" key="6">
    <source>
    </source>
</evidence>
<evidence type="ECO:0007829" key="7">
    <source>
        <dbReference type="PDB" id="1TXG"/>
    </source>
</evidence>
<name>GPDA_ARCFU</name>